<keyword id="KW-0150">Chloroplast</keyword>
<keyword id="KW-0341">Growth regulation</keyword>
<keyword id="KW-0472">Membrane</keyword>
<keyword id="KW-0934">Plastid</keyword>
<keyword id="KW-1002">Plastid outer membrane</keyword>
<keyword id="KW-1185">Reference proteome</keyword>
<dbReference type="EMBL" id="AL353814">
    <property type="protein sequence ID" value="CAB88424.1"/>
    <property type="status" value="ALT_SEQ"/>
    <property type="molecule type" value="Genomic_DNA"/>
</dbReference>
<dbReference type="EMBL" id="CP002686">
    <property type="protein sequence ID" value="AEE77870.1"/>
    <property type="molecule type" value="Genomic_DNA"/>
</dbReference>
<dbReference type="EMBL" id="BT020246">
    <property type="protein sequence ID" value="AAV74240.1"/>
    <property type="molecule type" value="mRNA"/>
</dbReference>
<dbReference type="EMBL" id="BT021139">
    <property type="protein sequence ID" value="AAX22274.1"/>
    <property type="molecule type" value="mRNA"/>
</dbReference>
<dbReference type="PIR" id="T49132">
    <property type="entry name" value="T49132"/>
</dbReference>
<dbReference type="RefSeq" id="NP_190002.2">
    <property type="nucleotide sequence ID" value="NM_114284.4"/>
</dbReference>
<dbReference type="FunCoup" id="Q5PP51">
    <property type="interactions" value="1082"/>
</dbReference>
<dbReference type="STRING" id="3702.Q5PP51"/>
<dbReference type="PaxDb" id="3702-AT3G44160.1"/>
<dbReference type="ProteomicsDB" id="175422"/>
<dbReference type="EnsemblPlants" id="AT3G44160.1">
    <property type="protein sequence ID" value="AT3G44160.1"/>
    <property type="gene ID" value="AT3G44160"/>
</dbReference>
<dbReference type="GeneID" id="823537"/>
<dbReference type="Gramene" id="AT3G44160.1">
    <property type="protein sequence ID" value="AT3G44160.1"/>
    <property type="gene ID" value="AT3G44160"/>
</dbReference>
<dbReference type="KEGG" id="ath:AT3G44160"/>
<dbReference type="Araport" id="AT3G44160"/>
<dbReference type="TAIR" id="AT3G44160">
    <property type="gene designation" value="P39"/>
</dbReference>
<dbReference type="eggNOG" id="ENOG502QT7K">
    <property type="taxonomic scope" value="Eukaryota"/>
</dbReference>
<dbReference type="HOGENOM" id="CLU_078932_0_0_1"/>
<dbReference type="InParanoid" id="Q5PP51"/>
<dbReference type="OMA" id="GSPHDSM"/>
<dbReference type="OrthoDB" id="2013615at2759"/>
<dbReference type="PhylomeDB" id="Q5PP51"/>
<dbReference type="PRO" id="PR:Q5PP51"/>
<dbReference type="Proteomes" id="UP000006548">
    <property type="component" value="Chromosome 3"/>
</dbReference>
<dbReference type="ExpressionAtlas" id="Q5PP51">
    <property type="expression patterns" value="baseline and differential"/>
</dbReference>
<dbReference type="GO" id="GO:0009507">
    <property type="term" value="C:chloroplast"/>
    <property type="evidence" value="ECO:0000314"/>
    <property type="project" value="TAIR"/>
</dbReference>
<dbReference type="GO" id="GO:0009707">
    <property type="term" value="C:chloroplast outer membrane"/>
    <property type="evidence" value="ECO:0000314"/>
    <property type="project" value="TAIR"/>
</dbReference>
<dbReference type="GO" id="GO:0015267">
    <property type="term" value="F:channel activity"/>
    <property type="evidence" value="ECO:0000314"/>
    <property type="project" value="TAIR"/>
</dbReference>
<dbReference type="FunFam" id="2.40.160.50:FF:000007">
    <property type="entry name" value="Outer envelope protein 80, chloroplastic"/>
    <property type="match status" value="1"/>
</dbReference>
<dbReference type="Gene3D" id="2.40.160.50">
    <property type="entry name" value="membrane protein fhac: a member of the omp85/tpsb transporter family"/>
    <property type="match status" value="1"/>
</dbReference>
<dbReference type="InterPro" id="IPR000184">
    <property type="entry name" value="Bac_surfAg_D15"/>
</dbReference>
<dbReference type="InterPro" id="IPR039910">
    <property type="entry name" value="D15-like"/>
</dbReference>
<dbReference type="PANTHER" id="PTHR12815:SF40">
    <property type="entry name" value="OUTER ENVELOPE PROTEIN 36, CHLOROPLASTIC-RELATED"/>
    <property type="match status" value="1"/>
</dbReference>
<dbReference type="PANTHER" id="PTHR12815">
    <property type="entry name" value="SORTING AND ASSEMBLY MACHINERY SAMM50 PROTEIN FAMILY MEMBER"/>
    <property type="match status" value="1"/>
</dbReference>
<dbReference type="Pfam" id="PF01103">
    <property type="entry name" value="Omp85"/>
    <property type="match status" value="1"/>
</dbReference>
<evidence type="ECO:0000269" key="1">
    <source>
    </source>
</evidence>
<evidence type="ECO:0000269" key="2">
    <source>
    </source>
</evidence>
<evidence type="ECO:0000269" key="3">
    <source>
    </source>
</evidence>
<evidence type="ECO:0000303" key="4">
    <source>
    </source>
</evidence>
<evidence type="ECO:0000305" key="5"/>
<evidence type="ECO:0000312" key="6">
    <source>
        <dbReference type="Araport" id="AT3G44160"/>
    </source>
</evidence>
<evidence type="ECO:0000312" key="7">
    <source>
        <dbReference type="EMBL" id="CAB88424.1"/>
    </source>
</evidence>
<reference key="1">
    <citation type="journal article" date="2000" name="Nature">
        <title>Sequence and analysis of chromosome 3 of the plant Arabidopsis thaliana.</title>
        <authorList>
            <person name="Salanoubat M."/>
            <person name="Lemcke K."/>
            <person name="Rieger M."/>
            <person name="Ansorge W."/>
            <person name="Unseld M."/>
            <person name="Fartmann B."/>
            <person name="Valle G."/>
            <person name="Bloecker H."/>
            <person name="Perez-Alonso M."/>
            <person name="Obermaier B."/>
            <person name="Delseny M."/>
            <person name="Boutry M."/>
            <person name="Grivell L.A."/>
            <person name="Mache R."/>
            <person name="Puigdomenech P."/>
            <person name="De Simone V."/>
            <person name="Choisne N."/>
            <person name="Artiguenave F."/>
            <person name="Robert C."/>
            <person name="Brottier P."/>
            <person name="Wincker P."/>
            <person name="Cattolico L."/>
            <person name="Weissenbach J."/>
            <person name="Saurin W."/>
            <person name="Quetier F."/>
            <person name="Schaefer M."/>
            <person name="Mueller-Auer S."/>
            <person name="Gabel C."/>
            <person name="Fuchs M."/>
            <person name="Benes V."/>
            <person name="Wurmbach E."/>
            <person name="Drzonek H."/>
            <person name="Erfle H."/>
            <person name="Jordan N."/>
            <person name="Bangert S."/>
            <person name="Wiedelmann R."/>
            <person name="Kranz H."/>
            <person name="Voss H."/>
            <person name="Holland R."/>
            <person name="Brandt P."/>
            <person name="Nyakatura G."/>
            <person name="Vezzi A."/>
            <person name="D'Angelo M."/>
            <person name="Pallavicini A."/>
            <person name="Toppo S."/>
            <person name="Simionati B."/>
            <person name="Conrad A."/>
            <person name="Hornischer K."/>
            <person name="Kauer G."/>
            <person name="Loehnert T.-H."/>
            <person name="Nordsiek G."/>
            <person name="Reichelt J."/>
            <person name="Scharfe M."/>
            <person name="Schoen O."/>
            <person name="Bargues M."/>
            <person name="Terol J."/>
            <person name="Climent J."/>
            <person name="Navarro P."/>
            <person name="Collado C."/>
            <person name="Perez-Perez A."/>
            <person name="Ottenwaelder B."/>
            <person name="Duchemin D."/>
            <person name="Cooke R."/>
            <person name="Laudie M."/>
            <person name="Berger-Llauro C."/>
            <person name="Purnelle B."/>
            <person name="Masuy D."/>
            <person name="de Haan M."/>
            <person name="Maarse A.C."/>
            <person name="Alcaraz J.-P."/>
            <person name="Cottet A."/>
            <person name="Casacuberta E."/>
            <person name="Monfort A."/>
            <person name="Argiriou A."/>
            <person name="Flores M."/>
            <person name="Liguori R."/>
            <person name="Vitale D."/>
            <person name="Mannhaupt G."/>
            <person name="Haase D."/>
            <person name="Schoof H."/>
            <person name="Rudd S."/>
            <person name="Zaccaria P."/>
            <person name="Mewes H.-W."/>
            <person name="Mayer K.F.X."/>
            <person name="Kaul S."/>
            <person name="Town C.D."/>
            <person name="Koo H.L."/>
            <person name="Tallon L.J."/>
            <person name="Jenkins J."/>
            <person name="Rooney T."/>
            <person name="Rizzo M."/>
            <person name="Walts A."/>
            <person name="Utterback T."/>
            <person name="Fujii C.Y."/>
            <person name="Shea T.P."/>
            <person name="Creasy T.H."/>
            <person name="Haas B."/>
            <person name="Maiti R."/>
            <person name="Wu D."/>
            <person name="Peterson J."/>
            <person name="Van Aken S."/>
            <person name="Pai G."/>
            <person name="Militscher J."/>
            <person name="Sellers P."/>
            <person name="Gill J.E."/>
            <person name="Feldblyum T.V."/>
            <person name="Preuss D."/>
            <person name="Lin X."/>
            <person name="Nierman W.C."/>
            <person name="Salzberg S.L."/>
            <person name="White O."/>
            <person name="Venter J.C."/>
            <person name="Fraser C.M."/>
            <person name="Kaneko T."/>
            <person name="Nakamura Y."/>
            <person name="Sato S."/>
            <person name="Kato T."/>
            <person name="Asamizu E."/>
            <person name="Sasamoto S."/>
            <person name="Kimura T."/>
            <person name="Idesawa K."/>
            <person name="Kawashima K."/>
            <person name="Kishida Y."/>
            <person name="Kiyokawa C."/>
            <person name="Kohara M."/>
            <person name="Matsumoto M."/>
            <person name="Matsuno A."/>
            <person name="Muraki A."/>
            <person name="Nakayama S."/>
            <person name="Nakazaki N."/>
            <person name="Shinpo S."/>
            <person name="Takeuchi C."/>
            <person name="Wada T."/>
            <person name="Watanabe A."/>
            <person name="Yamada M."/>
            <person name="Yasuda M."/>
            <person name="Tabata S."/>
        </authorList>
    </citation>
    <scope>NUCLEOTIDE SEQUENCE [LARGE SCALE GENOMIC DNA]</scope>
    <source>
        <strain>cv. Columbia</strain>
    </source>
</reference>
<reference key="2">
    <citation type="journal article" date="2017" name="Plant J.">
        <title>Araport11: a complete reannotation of the Arabidopsis thaliana reference genome.</title>
        <authorList>
            <person name="Cheng C.Y."/>
            <person name="Krishnakumar V."/>
            <person name="Chan A.P."/>
            <person name="Thibaud-Nissen F."/>
            <person name="Schobel S."/>
            <person name="Town C.D."/>
        </authorList>
    </citation>
    <scope>GENOME REANNOTATION</scope>
    <source>
        <strain>cv. Columbia</strain>
    </source>
</reference>
<reference key="3">
    <citation type="submission" date="2005-03" db="EMBL/GenBank/DDBJ databases">
        <title>Arabidopsis ORF clones.</title>
        <authorList>
            <person name="Kim C.J."/>
            <person name="Chen H."/>
            <person name="Cheuk R.F."/>
            <person name="Shinn P."/>
            <person name="Ecker J.R."/>
        </authorList>
    </citation>
    <scope>NUCLEOTIDE SEQUENCE [LARGE SCALE MRNA]</scope>
    <source>
        <strain>cv. Columbia</strain>
    </source>
</reference>
<reference key="4">
    <citation type="journal article" date="2015" name="J. Plant Res.">
        <title>The Omp85-type outer membrane protein p36 of Arabidopsis thaliana evolved by recent gene duplication.</title>
        <authorList>
            <person name="Nicolaisen K."/>
            <person name="Missbach S."/>
            <person name="Hsueh Y.C."/>
            <person name="Ertel F."/>
            <person name="Fulgosi H."/>
            <person name="Sommer M.S."/>
            <person name="Schleiff E."/>
        </authorList>
    </citation>
    <scope>TISSUE SPECIFICITY</scope>
</reference>
<reference key="5">
    <citation type="journal article" date="2017" name="Proteins">
        <title>Chloroplast outer envelope protein P39 in Arabidopsis thaliana belongs to the Omp85 protein family.</title>
        <authorList>
            <person name="Hsueh Y.C."/>
            <person name="Flinner N."/>
            <person name="Gross L.E."/>
            <person name="Haarmann R."/>
            <person name="Mirus O."/>
            <person name="Sommer M.S."/>
            <person name="Schleiff E."/>
        </authorList>
    </citation>
    <scope>FUNCTION</scope>
    <scope>SUBCELLULAR LOCATION</scope>
</reference>
<reference key="6">
    <citation type="journal article" date="2018" name="Plant Biol.">
        <title>The outer membrane Omp85-like protein P39 influences metabolic homeostasis in mature Arabidopsis thaliana.</title>
        <authorList>
            <person name="Hsueh Y.C."/>
            <person name="Nicolaisen K."/>
            <person name="Gross L.E."/>
            <person name="Noethen J."/>
            <person name="Schauer N."/>
            <person name="Vojta L."/>
            <person name="Ertel F."/>
            <person name="Koch I."/>
            <person name="Ladig R."/>
            <person name="Fulgosi H."/>
            <person name="Fernie A.R."/>
            <person name="Schleiff E."/>
        </authorList>
    </citation>
    <scope>FUNCTION</scope>
    <scope>TISSUE SPECIFICITY</scope>
    <scope>DISRUPTION PHENOTYPE</scope>
</reference>
<accession>Q5PP51</accession>
<accession>Q9LXP7</accession>
<feature type="chain" id="PRO_0000446978" description="Outer envelope protein 39, chloroplastic">
    <location>
        <begin position="1"/>
        <end position="362"/>
    </location>
</feature>
<proteinExistence type="evidence at transcript level"/>
<name>OEP39_ARATH</name>
<organism>
    <name type="scientific">Arabidopsis thaliana</name>
    <name type="common">Mouse-ear cress</name>
    <dbReference type="NCBI Taxonomy" id="3702"/>
    <lineage>
        <taxon>Eukaryota</taxon>
        <taxon>Viridiplantae</taxon>
        <taxon>Streptophyta</taxon>
        <taxon>Embryophyta</taxon>
        <taxon>Tracheophyta</taxon>
        <taxon>Spermatophyta</taxon>
        <taxon>Magnoliopsida</taxon>
        <taxon>eudicotyledons</taxon>
        <taxon>Gunneridae</taxon>
        <taxon>Pentapetalae</taxon>
        <taxon>rosids</taxon>
        <taxon>malvids</taxon>
        <taxon>Brassicales</taxon>
        <taxon>Brassicaceae</taxon>
        <taxon>Camelineae</taxon>
        <taxon>Arabidopsis</taxon>
    </lineage>
</organism>
<comment type="function">
    <text evidence="1 3">Beta-barrel pore-forming protein which possesses voltage-dependent channel activity (PubMed:25401771). Required for proper plastid development (PubMed:29758131). Involved in the maintenance of metabolic homeostasis of full-grown plants (PubMed:29758131).</text>
</comment>
<comment type="subcellular location">
    <subcellularLocation>
        <location evidence="1">Plastid</location>
        <location evidence="1">Chloroplast outer membrane</location>
    </subcellularLocation>
</comment>
<comment type="tissue specificity">
    <text evidence="2 3">Expressed in germinating seeds (PubMed:25608613). Expressed in the vasculature of roots, cotyledons and leaves (PubMed:25608613, PubMed:29758131).</text>
</comment>
<comment type="disruption phenotype">
    <text evidence="3">Stunted growth, pale-green leaves, altered plastid structures in leaves, altered photosynthesis activity, and reduced accumulation of starch in leaf chloroplasts.</text>
</comment>
<comment type="similarity">
    <text evidence="5">Belongs to the OEP80 (TC 1.B.33.2) family.</text>
</comment>
<comment type="sequence caution" evidence="5">
    <conflict type="erroneous gene model prediction">
        <sequence resource="EMBL-CDS" id="CAB88424"/>
    </conflict>
</comment>
<gene>
    <name evidence="4" type="primary">P39</name>
    <name evidence="6" type="ordered locus">At3g44160</name>
    <name evidence="7" type="ORF">F26G5_110</name>
</gene>
<protein>
    <recommendedName>
        <fullName evidence="5">Outer envelope protein 39, chloroplastic</fullName>
    </recommendedName>
</protein>
<sequence>MGAQKSIHAGRAKIDVNVDFTHKLCTSLMFPAFRDTSSPLSLVIGSLCIKHPNLFGGSEKLDVSWDKGLYDSNVLVAFRRPRPEWRPQQCFFIQHSLSPEIGVHGTPVDNFSRSGSGGVNLSKLALGLDLSEPASSKWSSTTSIKFEHVRPINDDGRAITRDLDGFPITCSGNTHDSMVVLKQESRFAKATDQGLSHFSMQIEQGIPVVSKWLIFNRFKFVASKGVRFGPAFLLASLTGGSIVGDMAPYQAFAIGGLGSVRGYGEGAVGSGRSCLVANTELALPLNKMTEGTIFLDCGTDLGSSRLVPGNPSMRQGKPGFGYGFGYGLRFKSPLGHLQVDYAINAFNQKTLYFGVTNLASST</sequence>